<sequence length="45" mass="4862">DSCSNIIQPLTPCLNYVRALGQFSDIDIQTIPEQCGISATLPPID</sequence>
<proteinExistence type="evidence at protein level"/>
<organism>
    <name type="scientific">Broussonetia papyrifera</name>
    <name type="common">Paper mulberry</name>
    <name type="synonym">Morus papyrifera</name>
    <dbReference type="NCBI Taxonomy" id="172644"/>
    <lineage>
        <taxon>Eukaryota</taxon>
        <taxon>Viridiplantae</taxon>
        <taxon>Streptophyta</taxon>
        <taxon>Embryophyta</taxon>
        <taxon>Tracheophyta</taxon>
        <taxon>Spermatophyta</taxon>
        <taxon>Magnoliopsida</taxon>
        <taxon>eudicotyledons</taxon>
        <taxon>Gunneridae</taxon>
        <taxon>Pentapetalae</taxon>
        <taxon>rosids</taxon>
        <taxon>fabids</taxon>
        <taxon>Rosales</taxon>
        <taxon>Moraceae</taxon>
        <taxon>Dorstenieae</taxon>
        <taxon>Broussonetia</taxon>
    </lineage>
</organism>
<feature type="chain" id="PRO_0000462138" description="Non-specific lipid-transfer protein">
    <location>
        <begin position="1"/>
        <end position="45"/>
    </location>
</feature>
<feature type="non-consecutive residues" evidence="2">
    <location>
        <begin position="18"/>
        <end position="19"/>
    </location>
</feature>
<feature type="non-consecutive residues" evidence="2">
    <location>
        <begin position="27"/>
        <end position="28"/>
    </location>
</feature>
<feature type="non-terminal residue" evidence="2">
    <location>
        <position position="1"/>
    </location>
</feature>
<feature type="non-terminal residue" evidence="2">
    <location>
        <position position="45"/>
    </location>
</feature>
<comment type="function">
    <text evidence="2">Plant non-specific lipid-transfer proteins transfer phospholipids as well as galactolipids across membranes (Ref.1). May play a role in wax or cutin deposition in the cell walls of expanding epidermal cells and certain secretory tissues (Ref.1).</text>
</comment>
<comment type="tissue specificity">
    <text evidence="1 2">Expressed in pollen.</text>
</comment>
<comment type="allergen">
    <text evidence="1">Causes an allergic reaction in human.</text>
</comment>
<comment type="similarity">
    <text evidence="4">Belongs to the plant LTP family.</text>
</comment>
<comment type="caution">
    <text evidence="4">The order of the peptides shown is unknown.</text>
</comment>
<evidence type="ECO:0000269" key="1">
    <source>
    </source>
</evidence>
<evidence type="ECO:0000269" key="2">
    <source ref="1"/>
</evidence>
<evidence type="ECO:0000303" key="3">
    <source ref="1"/>
</evidence>
<evidence type="ECO:0000305" key="4"/>
<name>NSLTP_BROPA</name>
<reference evidence="4" key="1">
    <citation type="submission" date="2024-09" db="UniProtKB">
        <authorList>
            <person name="Abid H."/>
            <person name="Zaigham A."/>
            <person name="Michaela M."/>
            <person name="Edzard S."/>
        </authorList>
    </citation>
    <scope>PROTEIN SEQUENCE</scope>
    <scope>FUNCTION</scope>
    <scope>TISSUE SPECIFICITY</scope>
</reference>
<reference evidence="4" key="2">
    <citation type="journal article" date="2013" name="J. Investig. Allergol. Clin. Immunol.">
        <title>Immunoglobulin E reactivity and allergenic potency of Morus papyrifera (paper mulberry) pollen.</title>
        <authorList>
            <person name="Micheal S."/>
            <person name="Wangorsch A."/>
            <person name="Wolfheimer S."/>
            <person name="Foetisch K."/>
            <person name="Minhas K."/>
            <person name="Scheurer S."/>
            <person name="Ahmed A."/>
        </authorList>
    </citation>
    <scope>PROTEIN SEQUENCE OF 1-10</scope>
    <scope>ALLERGEN</scope>
    <scope>TISSUE SPECIFICITY</scope>
</reference>
<protein>
    <recommendedName>
        <fullName evidence="3">Non-specific lipid-transfer protein</fullName>
    </recommendedName>
    <allergenName evidence="4">Bro p 3.0101</allergenName>
</protein>
<keyword id="KW-0020">Allergen</keyword>
<keyword id="KW-0903">Direct protein sequencing</keyword>
<keyword id="KW-0446">Lipid-binding</keyword>
<keyword id="KW-0813">Transport</keyword>
<accession>C0HMD1</accession>